<gene>
    <name evidence="30" type="primary">KIN14E</name>
    <name evidence="33" type="synonym">KCBP</name>
    <name evidence="32" type="synonym">ZWI</name>
    <name evidence="31" type="ordered locus">At5g65930</name>
    <name evidence="34" type="ORF">K14B20.10</name>
</gene>
<name>KN14E_ARATH</name>
<organism>
    <name type="scientific">Arabidopsis thaliana</name>
    <name type="common">Mouse-ear cress</name>
    <dbReference type="NCBI Taxonomy" id="3702"/>
    <lineage>
        <taxon>Eukaryota</taxon>
        <taxon>Viridiplantae</taxon>
        <taxon>Streptophyta</taxon>
        <taxon>Embryophyta</taxon>
        <taxon>Tracheophyta</taxon>
        <taxon>Spermatophyta</taxon>
        <taxon>Magnoliopsida</taxon>
        <taxon>eudicotyledons</taxon>
        <taxon>Gunneridae</taxon>
        <taxon>Pentapetalae</taxon>
        <taxon>rosids</taxon>
        <taxon>malvids</taxon>
        <taxon>Brassicales</taxon>
        <taxon>Brassicaceae</taxon>
        <taxon>Camelineae</taxon>
        <taxon>Arabidopsis</taxon>
    </lineage>
</organism>
<accession>Q9FHN8</accession>
<accession>O22326</accession>
<accession>O23102</accession>
<accession>Q0WM77</accession>
<accession>Q39130</accession>
<accession>Q8VZV4</accession>
<comment type="function">
    <text evidence="7 10 11 14 16 17 18 19 20 22 23">Minus-end microtubule-dependent motor protein involved in the regulation of cell division and trichome morphogenesis through microtubules bundling. Possesses basal and microtubule-stimulated ATPase activities. Acts as a hub that brings together microtubules and actin filaments to modulate the cytoskeleton during trichome formation and morphogenesis (PubMed:26287478). Could be involved in the negative regulation of root growth (PubMed:25262228).</text>
</comment>
<comment type="subunit">
    <text evidence="6 7 8 9 10 11 12 13 14 15 16 18 20 22 23">Homodimer (via C-terminus) (PubMed:23805258). Binds microtubules via its N-terminus containing the MyTH4 domain and binds F-actin via its FERM domain (PubMed:26287478). Interacts with KIPK1 (PubMed:10788494, PubMed:25262228). Interacts with KIPK2 (PubMed:25262228). Interacts with AN (PubMed:11889034). Interacts with AIR9 (PubMed:25908862). Interacts (via C-terminus) with KIC, CAM2, CAM4 and CAM6. KIC and calmodulin show competitive binding to KCBP. Binding to calmodulin inhibits microtubule binding activity. Binding to KIC inhibits microtubule binding activity and microtubule-stimulated ATPase activity.</text>
</comment>
<comment type="interaction">
    <interactant intactId="EBI-1749651">
        <id>Q9FHN8</id>
    </interactant>
    <interactant intactId="EBI-12513601">
        <id>F4IIU4</id>
        <label>AIR9</label>
    </interactant>
    <organismsDiffer>false</organismsDiffer>
    <experiments>6</experiments>
</comment>
<comment type="interaction">
    <interactant intactId="EBI-1749651">
        <id>Q9FHN8</id>
    </interactant>
    <interactant intactId="EBI-1235664">
        <id>P25854</id>
        <label>CAM4</label>
    </interactant>
    <organismsDiffer>false</organismsDiffer>
    <experiments>2</experiments>
</comment>
<comment type="interaction">
    <interactant intactId="EBI-1749651">
        <id>Q9FHN8</id>
    </interactant>
    <interactant intactId="EBI-1397259">
        <id>P25069</id>
        <label>CAM5</label>
    </interactant>
    <organismsDiffer>false</organismsDiffer>
    <experiments>2</experiments>
</comment>
<comment type="interaction">
    <interactant intactId="EBI-1749651">
        <id>Q9FHN8</id>
    </interactant>
    <interactant intactId="EBI-1749673">
        <id>Q682T9</id>
        <label>CAM5</label>
    </interactant>
    <organismsDiffer>false</organismsDiffer>
    <experiments>2</experiments>
</comment>
<comment type="interaction">
    <interactant intactId="EBI-1749651">
        <id>Q9FHN8</id>
    </interactant>
    <interactant intactId="EBI-1236097">
        <id>Q03509</id>
        <label>CAM6</label>
    </interactant>
    <organismsDiffer>false</organismsDiffer>
    <experiments>2</experiments>
</comment>
<comment type="interaction">
    <interactant intactId="EBI-1749651">
        <id>Q9FHN8</id>
    </interactant>
    <interactant intactId="EBI-2353491">
        <id>Q9ZPX9</id>
        <label>KIC</label>
    </interactant>
    <organismsDiffer>false</organismsDiffer>
    <experiments>5</experiments>
</comment>
<comment type="interaction">
    <interactant intactId="EBI-1749651">
        <id>Q9FHN8</id>
    </interactant>
    <interactant intactId="EBI-1103859">
        <id>Q9LFA2</id>
        <label>KIPK1</label>
    </interactant>
    <organismsDiffer>false</organismsDiffer>
    <experiments>4</experiments>
</comment>
<comment type="interaction">
    <interactant intactId="EBI-15777922">
        <id>Q9FHN8-1</id>
    </interactant>
    <interactant intactId="EBI-2353491">
        <id>Q9ZPX9</id>
        <label>KIC</label>
    </interactant>
    <organismsDiffer>false</organismsDiffer>
    <experiments>2</experiments>
</comment>
<comment type="subcellular location">
    <subcellularLocation>
        <location evidence="15">Cytoplasm</location>
        <location evidence="15">Cell cortex</location>
    </subcellularLocation>
    <subcellularLocation>
        <location evidence="15 21">Cytoplasm</location>
        <location evidence="15 21">Cytoskeleton</location>
        <location evidence="15 21">Spindle</location>
    </subcellularLocation>
    <subcellularLocation>
        <location evidence="15 21">Cytoplasm</location>
        <location evidence="15 21">Cytoskeleton</location>
        <location evidence="15 21">Phragmoplast</location>
    </subcellularLocation>
    <subcellularLocation>
        <location evidence="16">Cytoplasm</location>
        <location evidence="16">Cytoskeleton</location>
    </subcellularLocation>
    <text evidence="15 16 21">Colocalizes with microtubules during preprophase and cytokinesis. In M-phase, locates to the preprophase band then remained in the cotical division site throughout mitotis and cytokinesis. Also detected towards the poles of the anaphase spindle and on the phragmoplast but absent from the metaphase spindle (PubMed:25908862, PubMed:9450347). Colocalizes with microtubules along the trichome branch and colocalizes with F-actin at the branch apex (PubMed:26287478).</text>
</comment>
<comment type="alternative products">
    <event type="alternative splicing"/>
    <isoform>
        <id>Q9FHN8-1</id>
        <name>1</name>
        <sequence type="displayed"/>
    </isoform>
    <isoform>
        <id>Q9FHN8-2</id>
        <name>2</name>
        <sequence type="described" ref="VSP_040367"/>
    </isoform>
</comment>
<comment type="tissue specificity">
    <text evidence="15 16 17">Widely expressed with the highest levels in flowers (PubMed:8636137). Strongly expressed in the root tip (PubMed:25908862). Highly detected in the branch apex of the trichome (PubMed:26287478).</text>
</comment>
<comment type="disruption phenotype">
    <text evidence="14 16 19">Trichomes with reduced branch number (PubMed:25262228, PubMed:26287478, PubMed:9177205). Impairment of trichomes branch tip sharpening due to disrupted transverse cortical F-actin cap (PubMed:26287478).</text>
</comment>
<comment type="similarity">
    <text evidence="24">Belongs to the TRAFAC class myosin-kinesin ATPase superfamily. Kinesin family. KIN-14 subfamily.</text>
</comment>
<evidence type="ECO:0000255" key="1"/>
<evidence type="ECO:0000255" key="2">
    <source>
        <dbReference type="PROSITE-ProRule" id="PRU00084"/>
    </source>
</evidence>
<evidence type="ECO:0000255" key="3">
    <source>
        <dbReference type="PROSITE-ProRule" id="PRU00283"/>
    </source>
</evidence>
<evidence type="ECO:0000255" key="4">
    <source>
        <dbReference type="PROSITE-ProRule" id="PRU00359"/>
    </source>
</evidence>
<evidence type="ECO:0000256" key="5">
    <source>
        <dbReference type="SAM" id="MobiDB-lite"/>
    </source>
</evidence>
<evidence type="ECO:0000269" key="6">
    <source>
    </source>
</evidence>
<evidence type="ECO:0000269" key="7">
    <source>
    </source>
</evidence>
<evidence type="ECO:0000269" key="8">
    <source>
    </source>
</evidence>
<evidence type="ECO:0000269" key="9">
    <source>
    </source>
</evidence>
<evidence type="ECO:0000269" key="10">
    <source>
    </source>
</evidence>
<evidence type="ECO:0000269" key="11">
    <source>
    </source>
</evidence>
<evidence type="ECO:0000269" key="12">
    <source>
    </source>
</evidence>
<evidence type="ECO:0000269" key="13">
    <source>
    </source>
</evidence>
<evidence type="ECO:0000269" key="14">
    <source>
    </source>
</evidence>
<evidence type="ECO:0000269" key="15">
    <source>
    </source>
</evidence>
<evidence type="ECO:0000269" key="16">
    <source>
    </source>
</evidence>
<evidence type="ECO:0000269" key="17">
    <source>
    </source>
</evidence>
<evidence type="ECO:0000269" key="18">
    <source>
    </source>
</evidence>
<evidence type="ECO:0000269" key="19">
    <source>
    </source>
</evidence>
<evidence type="ECO:0000269" key="20">
    <source>
    </source>
</evidence>
<evidence type="ECO:0000269" key="21">
    <source>
    </source>
</evidence>
<evidence type="ECO:0000269" key="22">
    <source>
    </source>
</evidence>
<evidence type="ECO:0000269" key="23">
    <source>
    </source>
</evidence>
<evidence type="ECO:0000303" key="24">
    <source>
    </source>
</evidence>
<evidence type="ECO:0000303" key="25">
    <source>
    </source>
</evidence>
<evidence type="ECO:0000303" key="26">
    <source>
    </source>
</evidence>
<evidence type="ECO:0000303" key="27">
    <source>
    </source>
</evidence>
<evidence type="ECO:0000303" key="28">
    <source>
    </source>
</evidence>
<evidence type="ECO:0000303" key="29">
    <source>
    </source>
</evidence>
<evidence type="ECO:0000305" key="30"/>
<evidence type="ECO:0000312" key="31">
    <source>
        <dbReference type="Araport" id="AT5G65930"/>
    </source>
</evidence>
<evidence type="ECO:0000312" key="32">
    <source>
        <dbReference type="EMBL" id="AAB61712.1"/>
    </source>
</evidence>
<evidence type="ECO:0000312" key="33">
    <source>
        <dbReference type="EMBL" id="AAC37475.1"/>
    </source>
</evidence>
<evidence type="ECO:0000312" key="34">
    <source>
        <dbReference type="EMBL" id="BAB11140.1"/>
    </source>
</evidence>
<evidence type="ECO:0007744" key="35">
    <source>
        <dbReference type="PDB" id="3H4S"/>
    </source>
</evidence>
<evidence type="ECO:0007744" key="36">
    <source>
        <dbReference type="PDB" id="4FRZ"/>
    </source>
</evidence>
<evidence type="ECO:0007829" key="37">
    <source>
        <dbReference type="PDB" id="3H4S"/>
    </source>
</evidence>
<evidence type="ECO:0007829" key="38">
    <source>
        <dbReference type="PDB" id="4FRZ"/>
    </source>
</evidence>
<protein>
    <recommendedName>
        <fullName evidence="30">Kinesin-like protein KIN-14E</fullName>
    </recommendedName>
    <alternativeName>
        <fullName evidence="26 29">Kinesin-like calmodulin-binding protein</fullName>
    </alternativeName>
    <alternativeName>
        <fullName evidence="27">Protein ZWICHEL</fullName>
    </alternativeName>
</protein>
<sequence length="1260" mass="143449">MEGQRGSNSSLSSGNGTEVATDVSSCFYVPNPSGTDFDAESSSLPPLSPAPQVALSIPAELAAAIPLIDRFQVEAFLRLMQKQIQSAGKRGFFYSKKSSGSNVRERFTFEDMLCFQKDPIPTSLLKINSDLVSRATKLFHLILKYMGVDSSDRSTPPSLDERIDLVGKLFKKTLKRVELRDELFAQISKQTRHNPDRQYLIKAWELMYLCASSMPPSKDIGGYLSEYIHNVAHDATIEPDAQVLAVNTLKALKRSIKAGPRHTTPGREEIEALLTGRKLTTIVFFLDETFEEISYDMATTVSDAVEELAGTIKLSAFSSFSLFECRKVVSSSKSSDPGNEEYIGLDDNKYIGDLLAEFKAIKDRNKGEILHCKLVFKKKLFRESDEAVTDLMFVQLSYVQLQHDYLLGNYPVGRDDAAQLCALQILVGIGFVNSPESCIDWTSLLERFLPRQIAITRAKREWELDILARYRSMENVTKDDARQQFLRILKALPYGNSVFFSVRKIDDPIGLLPGRIILGINKRGVHFFRPVPKEYLHSAELRDIMQFGSSNTAVFFKMRVAGVLHIFQFETKQGEEICVALQTHINDVMLRRYSKARSAANSLVNGDISCSSKPQNFEVYEKRLQDLSKAYEESQKKIEKLMDEQQEKNQQEVTLREELEAIHNGLELERRKLLEVTLDRDKLRSLCDEKGTTIQSLMSELRGMEARLAKSGNTKSSKETKSELAEMNNQILYKIQKELEVRNKELHVAVDNSKRLLSENKILEQNLNIEKKKKEEVEIHQKRYEQEKKVLKLRVSELENKLEVLAQDLDSAESTIESKNSDMLLLQNNLKELEELREMKEDIDRKNEQTAAILKMQGAQLAELEILYKEEQVLRKRYYNTIEDMKGKIRVYCRIRPLNEKESSEREKQMLTTVDEFTVEHPWKDDKRKQHIYDRVFDMRASQDDIFEDTKYLVQSAVDGYNVCIFAYGQTGSGKTFTIYGHESNPGLTPRATKELFNILKRDSKRFSFSLKAYMVELYQDTLVDLLLPKSARRLKLEIKKDSKGMVFVENVTTIPISTLEELRMILERGSERRHVSGTNMNEESSRSHLILSVVIESIDLQTQSAARGKLSFVDLAGSERVKKSGSAGCQLKEAQSINKSLSALGDVIGALSSGNQHIPYRNHKLTMLMSDSLGGNAKTLMFVNVSPAESNLDETYNSLLYASRVRTIVNDPSKHISSKEMVRLKKLVAYWKEQAGKKGEEEDLVDIEEDRTRKDEADS</sequence>
<keyword id="KW-0002">3D-structure</keyword>
<keyword id="KW-0025">Alternative splicing</keyword>
<keyword id="KW-0067">ATP-binding</keyword>
<keyword id="KW-0112">Calmodulin-binding</keyword>
<keyword id="KW-0175">Coiled coil</keyword>
<keyword id="KW-0963">Cytoplasm</keyword>
<keyword id="KW-0206">Cytoskeleton</keyword>
<keyword id="KW-0505">Motor protein</keyword>
<keyword id="KW-0547">Nucleotide-binding</keyword>
<keyword id="KW-1185">Reference proteome</keyword>
<feature type="chain" id="PRO_0000403273" description="Kinesin-like protein KIN-14E">
    <location>
        <begin position="1"/>
        <end position="1260"/>
    </location>
</feature>
<feature type="domain" description="MyTH4" evidence="4">
    <location>
        <begin position="115"/>
        <end position="274"/>
    </location>
</feature>
<feature type="domain" description="FERM" evidence="2">
    <location>
        <begin position="279"/>
        <end position="593"/>
    </location>
</feature>
<feature type="domain" description="Kinesin motor" evidence="3">
    <location>
        <begin position="888"/>
        <end position="1209"/>
    </location>
</feature>
<feature type="region of interest" description="Calmodulin-binding" evidence="28">
    <location>
        <begin position="1217"/>
        <end position="1239"/>
    </location>
</feature>
<feature type="region of interest" description="Homodimerization domain" evidence="25">
    <location>
        <begin position="1221"/>
        <end position="1260"/>
    </location>
</feature>
<feature type="region of interest" description="Disordered" evidence="5">
    <location>
        <begin position="1236"/>
        <end position="1260"/>
    </location>
</feature>
<feature type="coiled-coil region" evidence="1">
    <location>
        <begin position="615"/>
        <end position="676"/>
    </location>
</feature>
<feature type="coiled-coil region" evidence="1">
    <location>
        <begin position="753"/>
        <end position="853"/>
    </location>
</feature>
<feature type="compositionally biased region" description="Basic and acidic residues" evidence="5">
    <location>
        <begin position="1251"/>
        <end position="1260"/>
    </location>
</feature>
<feature type="binding site" evidence="35 36">
    <location>
        <begin position="972"/>
        <end position="977"/>
    </location>
    <ligand>
        <name>ATP</name>
        <dbReference type="ChEBI" id="CHEBI:30616"/>
    </ligand>
</feature>
<feature type="splice variant" id="VSP_040367" description="In isoform 2." evidence="30">
    <location>
        <position position="306"/>
    </location>
</feature>
<feature type="mutagenesis site" description="Defective in ATP hydrolysis. Severe trichome phenotypes." evidence="16">
    <original>T</original>
    <variation>N</variation>
    <location>
        <position position="976"/>
    </location>
</feature>
<feature type="mutagenesis site" description="No effect on binding to microtubule or regulation by KIC." evidence="12 13">
    <original>C</original>
    <variation>N</variation>
    <location>
        <position position="1130"/>
    </location>
</feature>
<feature type="sequence conflict" description="In Ref. 1; AAC37475." evidence="30" ref="1">
    <original>D</original>
    <variation>IPI</variation>
    <location>
        <position position="118"/>
    </location>
</feature>
<feature type="sequence conflict" description="In Ref. 1; AAC37475." evidence="30" ref="1">
    <original>EL</original>
    <variation>V</variation>
    <location>
        <begin position="307"/>
        <end position="308"/>
    </location>
</feature>
<feature type="sequence conflict" description="In Ref. 1; AAC37475." evidence="30" ref="1">
    <original>D</original>
    <variation>G</variation>
    <location>
        <position position="415"/>
    </location>
</feature>
<feature type="sequence conflict" description="In Ref. 6; AAL36167." evidence="30" ref="6">
    <original>V</original>
    <variation>D</variation>
    <location>
        <position position="588"/>
    </location>
</feature>
<feature type="sequence conflict" description="In Ref. 2; AAC49901." evidence="30" ref="2">
    <original>S</original>
    <variation>C</variation>
    <location>
        <position position="602"/>
    </location>
</feature>
<feature type="sequence conflict" description="In Ref. 2; AAC49901." evidence="30" ref="2">
    <original>S</original>
    <variation>C</variation>
    <location>
        <position position="611"/>
    </location>
</feature>
<feature type="sequence conflict" description="In Ref. 2; AAC49901." evidence="30" ref="2">
    <original>T</original>
    <variation>P</variation>
    <location>
        <position position="693"/>
    </location>
</feature>
<feature type="sequence conflict" description="In Ref. 2; AAC49901." evidence="30" ref="2">
    <original>P</original>
    <variation>A</variation>
    <location>
        <position position="922"/>
    </location>
</feature>
<feature type="sequence conflict" description="In Ref. 1; AAC37475." evidence="30" ref="1">
    <original>F</original>
    <variation>S</variation>
    <location>
        <position position="977"/>
    </location>
</feature>
<feature type="sequence conflict" description="In Ref. 1; AAC37475." evidence="30" ref="1">
    <original>K</original>
    <variation>T</variation>
    <location>
        <position position="1044"/>
    </location>
</feature>
<feature type="sequence conflict" description="In Ref. 6; AAL36167." evidence="30" ref="6">
    <original>S</original>
    <variation>N</variation>
    <location>
        <position position="1085"/>
    </location>
</feature>
<feature type="sequence conflict" description="In Ref. 6; AAL36167." evidence="30" ref="6">
    <original>N</original>
    <variation>D</variation>
    <location>
        <position position="1192"/>
    </location>
</feature>
<feature type="strand" evidence="37">
    <location>
        <begin position="888"/>
        <end position="895"/>
    </location>
</feature>
<feature type="helix" evidence="37">
    <location>
        <begin position="900"/>
        <end position="904"/>
    </location>
</feature>
<feature type="strand" evidence="37">
    <location>
        <begin position="912"/>
        <end position="915"/>
    </location>
</feature>
<feature type="strand" evidence="37">
    <location>
        <begin position="918"/>
        <end position="921"/>
    </location>
</feature>
<feature type="strand" evidence="37">
    <location>
        <begin position="924"/>
        <end position="926"/>
    </location>
</feature>
<feature type="strand" evidence="37">
    <location>
        <begin position="929"/>
        <end position="932"/>
    </location>
</feature>
<feature type="strand" evidence="37">
    <location>
        <begin position="934"/>
        <end position="937"/>
    </location>
</feature>
<feature type="helix" evidence="37">
    <location>
        <begin position="943"/>
        <end position="950"/>
    </location>
</feature>
<feature type="helix" evidence="37">
    <location>
        <begin position="952"/>
        <end position="958"/>
    </location>
</feature>
<feature type="strand" evidence="37">
    <location>
        <begin position="962"/>
        <end position="970"/>
    </location>
</feature>
<feature type="helix" evidence="37">
    <location>
        <begin position="975"/>
        <end position="979"/>
    </location>
</feature>
<feature type="strand" evidence="38">
    <location>
        <begin position="983"/>
        <end position="986"/>
    </location>
</feature>
<feature type="helix" evidence="37">
    <location>
        <begin position="988"/>
        <end position="1002"/>
    </location>
</feature>
<feature type="turn" evidence="37">
    <location>
        <begin position="1003"/>
        <end position="1006"/>
    </location>
</feature>
<feature type="strand" evidence="37">
    <location>
        <begin position="1007"/>
        <end position="1019"/>
    </location>
</feature>
<feature type="strand" evidence="37">
    <location>
        <begin position="1022"/>
        <end position="1027"/>
    </location>
</feature>
<feature type="strand" evidence="38">
    <location>
        <begin position="1030"/>
        <end position="1032"/>
    </location>
</feature>
<feature type="strand" evidence="37">
    <location>
        <begin position="1038"/>
        <end position="1041"/>
    </location>
</feature>
<feature type="strand" evidence="37">
    <location>
        <begin position="1047"/>
        <end position="1050"/>
    </location>
</feature>
<feature type="strand" evidence="37">
    <location>
        <begin position="1055"/>
        <end position="1057"/>
    </location>
</feature>
<feature type="helix" evidence="37">
    <location>
        <begin position="1060"/>
        <end position="1071"/>
    </location>
</feature>
<feature type="helix" evidence="37">
    <location>
        <begin position="1084"/>
        <end position="1087"/>
    </location>
</feature>
<feature type="strand" evidence="37">
    <location>
        <begin position="1088"/>
        <end position="1100"/>
    </location>
</feature>
<feature type="turn" evidence="37">
    <location>
        <begin position="1101"/>
        <end position="1103"/>
    </location>
</feature>
<feature type="strand" evidence="37">
    <location>
        <begin position="1106"/>
        <end position="1115"/>
    </location>
</feature>
<feature type="helix" evidence="37">
    <location>
        <begin position="1129"/>
        <end position="1154"/>
    </location>
</feature>
<feature type="helix" evidence="38">
    <location>
        <begin position="1161"/>
        <end position="1163"/>
    </location>
</feature>
<feature type="helix" evidence="37">
    <location>
        <begin position="1165"/>
        <end position="1169"/>
    </location>
</feature>
<feature type="helix" evidence="37">
    <location>
        <begin position="1171"/>
        <end position="1173"/>
    </location>
</feature>
<feature type="strand" evidence="37">
    <location>
        <begin position="1174"/>
        <end position="1177"/>
    </location>
</feature>
<feature type="strand" evidence="37">
    <location>
        <begin position="1179"/>
        <end position="1186"/>
    </location>
</feature>
<feature type="helix" evidence="37">
    <location>
        <begin position="1190"/>
        <end position="1192"/>
    </location>
</feature>
<feature type="helix" evidence="37">
    <location>
        <begin position="1193"/>
        <end position="1206"/>
    </location>
</feature>
<feature type="helix" evidence="37">
    <location>
        <begin position="1219"/>
        <end position="1240"/>
    </location>
</feature>
<dbReference type="EMBL" id="L40358">
    <property type="protein sequence ID" value="AAC37475.1"/>
    <property type="molecule type" value="mRNA"/>
</dbReference>
<dbReference type="EMBL" id="AF002220">
    <property type="protein sequence ID" value="AAC49901.1"/>
    <property type="molecule type" value="Genomic_DNA"/>
</dbReference>
<dbReference type="EMBL" id="AF002678">
    <property type="protein sequence ID" value="AAB61712.1"/>
    <property type="molecule type" value="Genomic_DNA"/>
</dbReference>
<dbReference type="EMBL" id="AB018108">
    <property type="protein sequence ID" value="BAB11140.1"/>
    <property type="molecule type" value="Genomic_DNA"/>
</dbReference>
<dbReference type="EMBL" id="CP002688">
    <property type="protein sequence ID" value="AED98125.1"/>
    <property type="molecule type" value="Genomic_DNA"/>
</dbReference>
<dbReference type="EMBL" id="CP002688">
    <property type="protein sequence ID" value="AED98126.1"/>
    <property type="molecule type" value="Genomic_DNA"/>
</dbReference>
<dbReference type="EMBL" id="AY063811">
    <property type="protein sequence ID" value="AAL36167.1"/>
    <property type="molecule type" value="mRNA"/>
</dbReference>
<dbReference type="EMBL" id="AK229953">
    <property type="protein sequence ID" value="BAF01779.1"/>
    <property type="molecule type" value="mRNA"/>
</dbReference>
<dbReference type="RefSeq" id="NP_569022.2">
    <molecule id="Q9FHN8-1"/>
    <property type="nucleotide sequence ID" value="NM_125990.4"/>
</dbReference>
<dbReference type="RefSeq" id="NP_851276.1">
    <molecule id="Q9FHN8-2"/>
    <property type="nucleotide sequence ID" value="NM_180945.2"/>
</dbReference>
<dbReference type="PDB" id="3H4S">
    <property type="method" value="X-ray"/>
    <property type="resolution" value="2.40 A"/>
    <property type="chains" value="A=875-1260"/>
</dbReference>
<dbReference type="PDB" id="4FRZ">
    <property type="method" value="X-ray"/>
    <property type="resolution" value="2.40 A"/>
    <property type="chains" value="A/B=875-1260"/>
</dbReference>
<dbReference type="PDBsum" id="3H4S"/>
<dbReference type="PDBsum" id="4FRZ"/>
<dbReference type="SMR" id="Q9FHN8"/>
<dbReference type="BioGRID" id="21965">
    <property type="interactions" value="3"/>
</dbReference>
<dbReference type="DIP" id="DIP-54846N"/>
<dbReference type="FunCoup" id="Q9FHN8">
    <property type="interactions" value="958"/>
</dbReference>
<dbReference type="IntAct" id="Q9FHN8">
    <property type="interactions" value="9"/>
</dbReference>
<dbReference type="STRING" id="3702.Q9FHN8"/>
<dbReference type="iPTMnet" id="Q9FHN8"/>
<dbReference type="PaxDb" id="3702-AT5G65930.3"/>
<dbReference type="EnsemblPlants" id="AT5G65930.1">
    <molecule id="Q9FHN8-2"/>
    <property type="protein sequence ID" value="AT5G65930.1"/>
    <property type="gene ID" value="AT5G65930"/>
</dbReference>
<dbReference type="EnsemblPlants" id="AT5G65930.2">
    <molecule id="Q9FHN8-1"/>
    <property type="protein sequence ID" value="AT5G65930.2"/>
    <property type="gene ID" value="AT5G65930"/>
</dbReference>
<dbReference type="GeneID" id="836723"/>
<dbReference type="Gramene" id="AT5G65930.1">
    <molecule id="Q9FHN8-2"/>
    <property type="protein sequence ID" value="AT5G65930.1"/>
    <property type="gene ID" value="AT5G65930"/>
</dbReference>
<dbReference type="Gramene" id="AT5G65930.2">
    <molecule id="Q9FHN8-1"/>
    <property type="protein sequence ID" value="AT5G65930.2"/>
    <property type="gene ID" value="AT5G65930"/>
</dbReference>
<dbReference type="KEGG" id="ath:AT5G65930"/>
<dbReference type="Araport" id="AT5G65930"/>
<dbReference type="TAIR" id="AT5G65930">
    <property type="gene designation" value="ZWI"/>
</dbReference>
<dbReference type="eggNOG" id="KOG0239">
    <property type="taxonomic scope" value="Eukaryota"/>
</dbReference>
<dbReference type="eggNOG" id="KOG4229">
    <property type="taxonomic scope" value="Eukaryota"/>
</dbReference>
<dbReference type="HOGENOM" id="CLU_001485_14_0_1"/>
<dbReference type="InParanoid" id="Q9FHN8"/>
<dbReference type="OrthoDB" id="3176171at2759"/>
<dbReference type="PhylomeDB" id="Q9FHN8"/>
<dbReference type="CD-CODE" id="33FCD62D">
    <property type="entry name" value="Centrosome"/>
</dbReference>
<dbReference type="EvolutionaryTrace" id="Q9FHN8"/>
<dbReference type="PRO" id="PR:Q9FHN8"/>
<dbReference type="Proteomes" id="UP000006548">
    <property type="component" value="Chromosome 5"/>
</dbReference>
<dbReference type="ExpressionAtlas" id="Q9FHN8">
    <property type="expression patterns" value="baseline and differential"/>
</dbReference>
<dbReference type="GO" id="GO:0055028">
    <property type="term" value="C:cortical microtubule"/>
    <property type="evidence" value="ECO:0000314"/>
    <property type="project" value="UniProtKB"/>
</dbReference>
<dbReference type="GO" id="GO:0005856">
    <property type="term" value="C:cytoskeleton"/>
    <property type="evidence" value="ECO:0000314"/>
    <property type="project" value="UniProtKB"/>
</dbReference>
<dbReference type="GO" id="GO:0072686">
    <property type="term" value="C:mitotic spindle"/>
    <property type="evidence" value="ECO:0000314"/>
    <property type="project" value="UniProtKB"/>
</dbReference>
<dbReference type="GO" id="GO:0009524">
    <property type="term" value="C:phragmoplast"/>
    <property type="evidence" value="ECO:0000314"/>
    <property type="project" value="UniProtKB"/>
</dbReference>
<dbReference type="GO" id="GO:0051015">
    <property type="term" value="F:actin filament binding"/>
    <property type="evidence" value="ECO:0000314"/>
    <property type="project" value="UniProtKB"/>
</dbReference>
<dbReference type="GO" id="GO:0043531">
    <property type="term" value="F:ADP binding"/>
    <property type="evidence" value="ECO:0000314"/>
    <property type="project" value="UniProtKB"/>
</dbReference>
<dbReference type="GO" id="GO:0005524">
    <property type="term" value="F:ATP binding"/>
    <property type="evidence" value="ECO:0007669"/>
    <property type="project" value="UniProtKB-KW"/>
</dbReference>
<dbReference type="GO" id="GO:0016887">
    <property type="term" value="F:ATP hydrolysis activity"/>
    <property type="evidence" value="ECO:0000314"/>
    <property type="project" value="UniProtKB"/>
</dbReference>
<dbReference type="GO" id="GO:0005509">
    <property type="term" value="F:calcium ion binding"/>
    <property type="evidence" value="ECO:0000314"/>
    <property type="project" value="UniProtKB"/>
</dbReference>
<dbReference type="GO" id="GO:0005516">
    <property type="term" value="F:calmodulin binding"/>
    <property type="evidence" value="ECO:0000314"/>
    <property type="project" value="UniProtKB"/>
</dbReference>
<dbReference type="GO" id="GO:0008017">
    <property type="term" value="F:microtubule binding"/>
    <property type="evidence" value="ECO:0000314"/>
    <property type="project" value="UniProtKB"/>
</dbReference>
<dbReference type="GO" id="GO:0008569">
    <property type="term" value="F:minus-end-directed microtubule motor activity"/>
    <property type="evidence" value="ECO:0000314"/>
    <property type="project" value="UniProtKB"/>
</dbReference>
<dbReference type="GO" id="GO:0016491">
    <property type="term" value="F:oxidoreductase activity"/>
    <property type="evidence" value="ECO:0007669"/>
    <property type="project" value="InterPro"/>
</dbReference>
<dbReference type="GO" id="GO:0042803">
    <property type="term" value="F:protein homodimerization activity"/>
    <property type="evidence" value="ECO:0000314"/>
    <property type="project" value="UniProtKB"/>
</dbReference>
<dbReference type="GO" id="GO:0019901">
    <property type="term" value="F:protein kinase binding"/>
    <property type="evidence" value="ECO:0000353"/>
    <property type="project" value="UniProtKB"/>
</dbReference>
<dbReference type="GO" id="GO:0043622">
    <property type="term" value="P:cortical microtubule organization"/>
    <property type="evidence" value="ECO:0000314"/>
    <property type="project" value="UniProtKB"/>
</dbReference>
<dbReference type="GO" id="GO:0001578">
    <property type="term" value="P:microtubule bundle formation"/>
    <property type="evidence" value="ECO:0000314"/>
    <property type="project" value="UniProtKB"/>
</dbReference>
<dbReference type="GO" id="GO:0007018">
    <property type="term" value="P:microtubule-based movement"/>
    <property type="evidence" value="ECO:0000314"/>
    <property type="project" value="UniProtKB"/>
</dbReference>
<dbReference type="GO" id="GO:0010091">
    <property type="term" value="P:trichome branching"/>
    <property type="evidence" value="ECO:0000315"/>
    <property type="project" value="UniProtKB"/>
</dbReference>
<dbReference type="GO" id="GO:0048629">
    <property type="term" value="P:trichome patterning"/>
    <property type="evidence" value="ECO:0000315"/>
    <property type="project" value="UniProtKB"/>
</dbReference>
<dbReference type="CDD" id="cd14473">
    <property type="entry name" value="FERM_B-lobe"/>
    <property type="match status" value="1"/>
</dbReference>
<dbReference type="CDD" id="cd13200">
    <property type="entry name" value="FERM_C_KCBP"/>
    <property type="match status" value="1"/>
</dbReference>
<dbReference type="CDD" id="cd01366">
    <property type="entry name" value="KISc_C_terminal"/>
    <property type="match status" value="1"/>
</dbReference>
<dbReference type="FunFam" id="1.20.80.10:FF:000018">
    <property type="entry name" value="Kinesin-like calmodulin binding protein"/>
    <property type="match status" value="1"/>
</dbReference>
<dbReference type="FunFam" id="3.40.850.10:FF:000041">
    <property type="entry name" value="Kinesin-like calmodulin-binding protein"/>
    <property type="match status" value="1"/>
</dbReference>
<dbReference type="FunFam" id="1.25.40.530:FF:000005">
    <property type="entry name" value="Kinesin-like calmodulin-binding protein (ZWICHEL)"/>
    <property type="match status" value="1"/>
</dbReference>
<dbReference type="FunFam" id="2.30.29.30:FF:000131">
    <property type="entry name" value="Kinesin-like calmodulin-binding protein (ZWICHEL)"/>
    <property type="match status" value="1"/>
</dbReference>
<dbReference type="FunFam" id="3.10.20.90:FF:000090">
    <property type="entry name" value="Kinesin-like calmodulin-binding protein (ZWICHEL)"/>
    <property type="match status" value="1"/>
</dbReference>
<dbReference type="Gene3D" id="1.20.80.10">
    <property type="match status" value="1"/>
</dbReference>
<dbReference type="Gene3D" id="6.10.250.760">
    <property type="match status" value="1"/>
</dbReference>
<dbReference type="Gene3D" id="3.40.850.10">
    <property type="entry name" value="Kinesin motor domain"/>
    <property type="match status" value="1"/>
</dbReference>
<dbReference type="Gene3D" id="1.25.40.530">
    <property type="entry name" value="MyTH4 domain"/>
    <property type="match status" value="1"/>
</dbReference>
<dbReference type="Gene3D" id="3.10.20.90">
    <property type="entry name" value="Phosphatidylinositol 3-kinase Catalytic Subunit, Chain A, domain 1"/>
    <property type="match status" value="1"/>
</dbReference>
<dbReference type="Gene3D" id="2.30.29.30">
    <property type="entry name" value="Pleckstrin-homology domain (PH domain)/Phosphotyrosine-binding domain (PTB)"/>
    <property type="match status" value="1"/>
</dbReference>
<dbReference type="InterPro" id="IPR019749">
    <property type="entry name" value="Band_41_domain"/>
</dbReference>
<dbReference type="InterPro" id="IPR014352">
    <property type="entry name" value="FERM/acyl-CoA-bd_prot_sf"/>
</dbReference>
<dbReference type="InterPro" id="IPR035963">
    <property type="entry name" value="FERM_2"/>
</dbReference>
<dbReference type="InterPro" id="IPR019748">
    <property type="entry name" value="FERM_central"/>
</dbReference>
<dbReference type="InterPro" id="IPR000299">
    <property type="entry name" value="FERM_domain"/>
</dbReference>
<dbReference type="InterPro" id="IPR002404">
    <property type="entry name" value="IRS_PTB"/>
</dbReference>
<dbReference type="InterPro" id="IPR027640">
    <property type="entry name" value="Kinesin-like_fam"/>
</dbReference>
<dbReference type="InterPro" id="IPR019821">
    <property type="entry name" value="Kinesin_motor_CS"/>
</dbReference>
<dbReference type="InterPro" id="IPR001752">
    <property type="entry name" value="Kinesin_motor_dom"/>
</dbReference>
<dbReference type="InterPro" id="IPR036961">
    <property type="entry name" value="Kinesin_motor_dom_sf"/>
</dbReference>
<dbReference type="InterPro" id="IPR000857">
    <property type="entry name" value="MyTH4_dom"/>
</dbReference>
<dbReference type="InterPro" id="IPR038185">
    <property type="entry name" value="MyTH4_dom_sf"/>
</dbReference>
<dbReference type="InterPro" id="IPR027417">
    <property type="entry name" value="P-loop_NTPase"/>
</dbReference>
<dbReference type="InterPro" id="IPR011993">
    <property type="entry name" value="PH-like_dom_sf"/>
</dbReference>
<dbReference type="InterPro" id="IPR011254">
    <property type="entry name" value="Prismane-like_sf"/>
</dbReference>
<dbReference type="PANTHER" id="PTHR47972:SF16">
    <property type="entry name" value="KINESIN-LIKE PROTEIN"/>
    <property type="match status" value="1"/>
</dbReference>
<dbReference type="PANTHER" id="PTHR47972">
    <property type="entry name" value="KINESIN-LIKE PROTEIN KLP-3"/>
    <property type="match status" value="1"/>
</dbReference>
<dbReference type="Pfam" id="PF00373">
    <property type="entry name" value="FERM_M"/>
    <property type="match status" value="1"/>
</dbReference>
<dbReference type="Pfam" id="PF02174">
    <property type="entry name" value="IRS"/>
    <property type="match status" value="1"/>
</dbReference>
<dbReference type="Pfam" id="PF00225">
    <property type="entry name" value="Kinesin"/>
    <property type="match status" value="1"/>
</dbReference>
<dbReference type="Pfam" id="PF00784">
    <property type="entry name" value="MyTH4"/>
    <property type="match status" value="1"/>
</dbReference>
<dbReference type="Pfam" id="PF21989">
    <property type="entry name" value="RA_2"/>
    <property type="match status" value="1"/>
</dbReference>
<dbReference type="PRINTS" id="PR00380">
    <property type="entry name" value="KINESINHEAVY"/>
</dbReference>
<dbReference type="SMART" id="SM00295">
    <property type="entry name" value="B41"/>
    <property type="match status" value="1"/>
</dbReference>
<dbReference type="SMART" id="SM00129">
    <property type="entry name" value="KISc"/>
    <property type="match status" value="1"/>
</dbReference>
<dbReference type="SMART" id="SM00139">
    <property type="entry name" value="MyTH4"/>
    <property type="match status" value="1"/>
</dbReference>
<dbReference type="SUPFAM" id="SSF52540">
    <property type="entry name" value="P-loop containing nucleoside triphosphate hydrolases"/>
    <property type="match status" value="1"/>
</dbReference>
<dbReference type="SUPFAM" id="SSF50729">
    <property type="entry name" value="PH domain-like"/>
    <property type="match status" value="1"/>
</dbReference>
<dbReference type="SUPFAM" id="SSF56821">
    <property type="entry name" value="Prismane protein-like"/>
    <property type="match status" value="1"/>
</dbReference>
<dbReference type="SUPFAM" id="SSF47031">
    <property type="entry name" value="Second domain of FERM"/>
    <property type="match status" value="1"/>
</dbReference>
<dbReference type="PROSITE" id="PS50057">
    <property type="entry name" value="FERM_3"/>
    <property type="match status" value="1"/>
</dbReference>
<dbReference type="PROSITE" id="PS00411">
    <property type="entry name" value="KINESIN_MOTOR_1"/>
    <property type="match status" value="1"/>
</dbReference>
<dbReference type="PROSITE" id="PS50067">
    <property type="entry name" value="KINESIN_MOTOR_2"/>
    <property type="match status" value="1"/>
</dbReference>
<dbReference type="PROSITE" id="PS51016">
    <property type="entry name" value="MYTH4"/>
    <property type="match status" value="1"/>
</dbReference>
<reference key="1">
    <citation type="journal article" date="1996" name="J. Biol. Chem.">
        <title>A novel plant calmodulin-binding protein with a kinesin heavy chain motor domain.</title>
        <authorList>
            <person name="Reddy A.S."/>
            <person name="Safadi F."/>
            <person name="Narasimhulu S.B."/>
            <person name="Golovkin M."/>
            <person name="Hu X."/>
        </authorList>
    </citation>
    <scope>NUCLEOTIDE SEQUENCE [MRNA]</scope>
    <scope>FUNCTION</scope>
    <scope>TISSUE SPECIFICITY</scope>
    <source>
        <strain>cv. Columbia</strain>
    </source>
</reference>
<reference key="2">
    <citation type="journal article" date="1997" name="Gene">
        <title>Structural organization of a gene encoding a novel calmodulin-binding kinesin-like protein from Arabidopsis.</title>
        <authorList>
            <person name="Reddy A.S."/>
            <person name="Narasimhulu S.B."/>
            <person name="Day I.S."/>
        </authorList>
    </citation>
    <scope>NUCLEOTIDE SEQUENCE [GENOMIC DNA]</scope>
    <source>
        <strain>cv. Columbia</strain>
    </source>
</reference>
<reference key="3">
    <citation type="journal article" date="1997" name="Proc. Natl. Acad. Sci. U.S.A.">
        <title>Essential role of a kinesin-like protein in Arabidopsis trichome morphogenesis.</title>
        <authorList>
            <person name="Oppenheimer D.G."/>
            <person name="Pollock M.A."/>
            <person name="Vacik J."/>
            <person name="Szymanski D.B."/>
            <person name="Ericson B."/>
            <person name="Feldmann K."/>
            <person name="Marks M.D."/>
        </authorList>
    </citation>
    <scope>NUCLEOTIDE SEQUENCE [GENOMIC DNA]</scope>
    <scope>FUNCTION</scope>
    <scope>DISRUPTION PHENOTYPE</scope>
</reference>
<reference key="4">
    <citation type="journal article" date="2000" name="DNA Res.">
        <title>Structural analysis of Arabidopsis thaliana chromosome 5. X. Sequence features of the regions of 3,076,755 bp covered by sixty P1 and TAC clones.</title>
        <authorList>
            <person name="Sato S."/>
            <person name="Nakamura Y."/>
            <person name="Kaneko T."/>
            <person name="Katoh T."/>
            <person name="Asamizu E."/>
            <person name="Kotani H."/>
            <person name="Tabata S."/>
        </authorList>
    </citation>
    <scope>NUCLEOTIDE SEQUENCE [LARGE SCALE GENOMIC DNA]</scope>
    <source>
        <strain>cv. Columbia</strain>
    </source>
</reference>
<reference key="5">
    <citation type="journal article" date="2017" name="Plant J.">
        <title>Araport11: a complete reannotation of the Arabidopsis thaliana reference genome.</title>
        <authorList>
            <person name="Cheng C.Y."/>
            <person name="Krishnakumar V."/>
            <person name="Chan A.P."/>
            <person name="Thibaud-Nissen F."/>
            <person name="Schobel S."/>
            <person name="Town C.D."/>
        </authorList>
    </citation>
    <scope>GENOME REANNOTATION</scope>
    <source>
        <strain>cv. Columbia</strain>
    </source>
</reference>
<reference key="6">
    <citation type="journal article" date="2003" name="Science">
        <title>Empirical analysis of transcriptional activity in the Arabidopsis genome.</title>
        <authorList>
            <person name="Yamada K."/>
            <person name="Lim J."/>
            <person name="Dale J.M."/>
            <person name="Chen H."/>
            <person name="Shinn P."/>
            <person name="Palm C.J."/>
            <person name="Southwick A.M."/>
            <person name="Wu H.C."/>
            <person name="Kim C.J."/>
            <person name="Nguyen M."/>
            <person name="Pham P.K."/>
            <person name="Cheuk R.F."/>
            <person name="Karlin-Newmann G."/>
            <person name="Liu S.X."/>
            <person name="Lam B."/>
            <person name="Sakano H."/>
            <person name="Wu T."/>
            <person name="Yu G."/>
            <person name="Miranda M."/>
            <person name="Quach H.L."/>
            <person name="Tripp M."/>
            <person name="Chang C.H."/>
            <person name="Lee J.M."/>
            <person name="Toriumi M.J."/>
            <person name="Chan M.M."/>
            <person name="Tang C.C."/>
            <person name="Onodera C.S."/>
            <person name="Deng J.M."/>
            <person name="Akiyama K."/>
            <person name="Ansari Y."/>
            <person name="Arakawa T."/>
            <person name="Banh J."/>
            <person name="Banno F."/>
            <person name="Bowser L."/>
            <person name="Brooks S.Y."/>
            <person name="Carninci P."/>
            <person name="Chao Q."/>
            <person name="Choy N."/>
            <person name="Enju A."/>
            <person name="Goldsmith A.D."/>
            <person name="Gurjal M."/>
            <person name="Hansen N.F."/>
            <person name="Hayashizaki Y."/>
            <person name="Johnson-Hopson C."/>
            <person name="Hsuan V.W."/>
            <person name="Iida K."/>
            <person name="Karnes M."/>
            <person name="Khan S."/>
            <person name="Koesema E."/>
            <person name="Ishida J."/>
            <person name="Jiang P.X."/>
            <person name="Jones T."/>
            <person name="Kawai J."/>
            <person name="Kamiya A."/>
            <person name="Meyers C."/>
            <person name="Nakajima M."/>
            <person name="Narusaka M."/>
            <person name="Seki M."/>
            <person name="Sakurai T."/>
            <person name="Satou M."/>
            <person name="Tamse R."/>
            <person name="Vaysberg M."/>
            <person name="Wallender E.K."/>
            <person name="Wong C."/>
            <person name="Yamamura Y."/>
            <person name="Yuan S."/>
            <person name="Shinozaki K."/>
            <person name="Davis R.W."/>
            <person name="Theologis A."/>
            <person name="Ecker J.R."/>
        </authorList>
    </citation>
    <scope>NUCLEOTIDE SEQUENCE [LARGE SCALE MRNA]</scope>
    <source>
        <strain>cv. Columbia</strain>
    </source>
</reference>
<reference key="7">
    <citation type="submission" date="2006-07" db="EMBL/GenBank/DDBJ databases">
        <title>Large-scale analysis of RIKEN Arabidopsis full-length (RAFL) cDNAs.</title>
        <authorList>
            <person name="Totoki Y."/>
            <person name="Seki M."/>
            <person name="Ishida J."/>
            <person name="Nakajima M."/>
            <person name="Enju A."/>
            <person name="Kamiya A."/>
            <person name="Narusaka M."/>
            <person name="Shin-i T."/>
            <person name="Nakagawa M."/>
            <person name="Sakamoto N."/>
            <person name="Oishi K."/>
            <person name="Kohara Y."/>
            <person name="Kobayashi M."/>
            <person name="Toyoda A."/>
            <person name="Sakaki Y."/>
            <person name="Sakurai T."/>
            <person name="Iida K."/>
            <person name="Akiyama K."/>
            <person name="Satou M."/>
            <person name="Toyoda T."/>
            <person name="Konagaya A."/>
            <person name="Carninci P."/>
            <person name="Kawai J."/>
            <person name="Hayashizaki Y."/>
            <person name="Shinozaki K."/>
        </authorList>
    </citation>
    <scope>NUCLEOTIDE SEQUENCE [LARGE SCALE MRNA] OF 885-1254</scope>
    <source>
        <strain>cv. Columbia</strain>
    </source>
</reference>
<reference key="8">
    <citation type="journal article" date="1997" name="Plant J.">
        <title>Interaction of Arabidopsis kinesin-like calmodulin-binding protein with tubulin subunits: modulation by Ca(2+)-calmodulin.</title>
        <authorList>
            <person name="Narasimhulu S.B."/>
            <person name="Kao Y.L."/>
            <person name="Reddy A.S."/>
        </authorList>
    </citation>
    <scope>FUNCTION</scope>
    <scope>SUBUNIT</scope>
    <scope>CALMODULIN-BINDING</scope>
</reference>
<reference key="9">
    <citation type="journal article" date="1997" name="Plant J.">
        <title>Localization of a kinesin-like calmodulin-binding protein in dividing cells of Arabidopsis and tobacco.</title>
        <authorList>
            <person name="Bowser J."/>
            <person name="Reddy A.S."/>
        </authorList>
    </citation>
    <scope>SUBCELLULAR LOCATION</scope>
</reference>
<reference key="10">
    <citation type="journal article" date="1997" name="Proc. Natl. Acad. Sci. U.S.A.">
        <title>In vitro motility of AtKCBP, a calmodulin-binding kinesin protein of Arabidopsis.</title>
        <authorList>
            <person name="Song H."/>
            <person name="Golovkin M."/>
            <person name="Reddy A.S."/>
            <person name="Endow S.A."/>
        </authorList>
    </citation>
    <scope>FUNCTION</scope>
    <scope>SUBUNIT</scope>
</reference>
<reference key="11">
    <citation type="journal article" date="1998" name="Cell Motil. Cytoskeleton">
        <title>Ca2+/calmodulin regulation of the Arabidopsis kinesin-like calmodulin-binding protein.</title>
        <authorList>
            <person name="Deavours B.E."/>
            <person name="Reddy A.S."/>
            <person name="Walker R.A."/>
        </authorList>
    </citation>
    <scope>FUNCTION</scope>
    <scope>SUBUNIT</scope>
    <scope>CALMODULIN-BINDING</scope>
</reference>
<reference key="12">
    <citation type="journal article" date="1998" name="Curr. Opin. Plant Biol.">
        <title>Genetics of plant cell shape.</title>
        <authorList>
            <person name="Oppenheimer D.G."/>
        </authorList>
    </citation>
    <scope>REVIEW</scope>
</reference>
<reference key="13">
    <citation type="journal article" date="1998" name="Plant Cell">
        <title>Characterization of microtubule binding domains in the Arabidopsis kinesin-like calmodulin binding protein.</title>
        <authorList>
            <person name="Narasimhulu S.B."/>
            <person name="Reddy A.S."/>
        </authorList>
    </citation>
    <scope>FUNCTION</scope>
    <scope>SUBUNIT</scope>
    <scope>CALMODULIN-BINDING</scope>
</reference>
<reference key="14">
    <citation type="journal article" date="1999" name="J. Biol. Chem.">
        <title>Interaction of a kinesin-like protein with calmodulin isoforms from Arabidopsis.</title>
        <authorList>
            <person name="Reddy V.S."/>
            <person name="Safadi F."/>
            <person name="Zielinski R.E."/>
            <person name="Reddy A.S."/>
        </authorList>
    </citation>
    <scope>INTERACTION WITH CAM2; CAM4 AND CAM6</scope>
</reference>
<reference key="15">
    <citation type="journal article" date="2000" name="Biochem. Biophys. Res. Commun.">
        <title>Bundling of microtubules by motor and tail domains of a kinesin-like calmodulin-binding protein from Arabidopsis: regulation by Ca(2+)/Calmodulin.</title>
        <authorList>
            <person name="Kao Y.L."/>
            <person name="Deavours B.E."/>
            <person name="Phelps K.K."/>
            <person name="Walker R.A."/>
            <person name="Reddy A.S."/>
        </authorList>
    </citation>
    <scope>FUNCTION</scope>
    <scope>SUBUNIT</scope>
    <scope>CALMODULIN-BINDING</scope>
</reference>
<reference key="16">
    <citation type="journal article" date="2000" name="J. Biol. Chem.">
        <title>Interaction of a kinesin-like calmodulin-binding protein with a protein kinase.</title>
        <authorList>
            <person name="Day I.S."/>
            <person name="Miller C."/>
            <person name="Golovkin M."/>
            <person name="Reddy A.S."/>
        </authorList>
    </citation>
    <scope>INTERACTION WITH KIPK1</scope>
</reference>
<reference key="17">
    <citation type="journal article" date="2001" name="BMC Genomics">
        <title>Kinesins in the Arabidopsis genome: a comparative analysis among eukaryotes.</title>
        <authorList>
            <person name="Reddy A.S."/>
            <person name="Day I.S."/>
        </authorList>
    </citation>
    <scope>GENE FAMILY</scope>
</reference>
<reference key="18">
    <citation type="journal article" date="2002" name="EMBO J.">
        <title>The cell morphogenesis gene ANGUSTIFOLIA encodes a CtBP/BARS-like protein and is involved in the control of the microtubule cytoskeleton.</title>
        <authorList>
            <person name="Folkers U."/>
            <person name="Kirik V."/>
            <person name="Schoebinger U."/>
            <person name="Falk S."/>
            <person name="Krishnakumar S."/>
            <person name="Pollock M.A."/>
            <person name="Oppenheimer D.G."/>
            <person name="Day I."/>
            <person name="Reddy A.S."/>
            <person name="Juergens G."/>
            <person name="Huelskamp M."/>
            <person name="Reddy A.R."/>
        </authorList>
    </citation>
    <scope>INTERACTION WITH AN</scope>
</reference>
<reference key="19">
    <citation type="journal article" date="2004" name="Plant Cell">
        <title>KIC, a novel Ca2+ binding protein with one EF-hand motif, interacts with a microtubule motor protein and regulates trichome morphogenesis.</title>
        <authorList>
            <person name="Reddy V.S."/>
            <person name="Day I.S."/>
            <person name="Thomas T."/>
            <person name="Reddy A.S.N."/>
        </authorList>
    </citation>
    <scope>FUNCTION</scope>
    <scope>INTERACTION WITH KIC</scope>
</reference>
<reference key="20">
    <citation type="journal article" date="2006" name="BMC Genomics">
        <title>Comprehensive comparative analysis of kinesins in photosynthetic eukaryotes.</title>
        <authorList>
            <person name="Richardson D.N."/>
            <person name="Simmons M.P."/>
            <person name="Reddy A.S."/>
        </authorList>
    </citation>
    <scope>GENE FAMILY</scope>
    <scope>NOMENCLATURE</scope>
</reference>
<reference key="21">
    <citation type="journal article" date="2007" name="Methods Mol. Biol.">
        <title>Analysis of calcium/calmodulin regulation of a plant kinesin using co-sedimentation and ATPase assays.</title>
        <authorList>
            <person name="Reddy A.S."/>
        </authorList>
    </citation>
    <scope>FUNCTION</scope>
    <scope>SUBUNIT</scope>
    <scope>CALMODULIN-BINDING</scope>
</reference>
<reference key="22">
    <citation type="journal article" date="2012" name="Protoplasma">
        <title>Functions of the Arabidopsis kinesin superfamily of microtubule-based motor proteins.</title>
        <authorList>
            <person name="Zhu C."/>
            <person name="Dixit R."/>
        </authorList>
    </citation>
    <scope>REVIEW</scope>
</reference>
<reference key="23">
    <citation type="journal article" date="2015" name="Elife">
        <title>Orchestration of microtubules and the actin cytoskeleton in trichome cell shape determination by a plant-unique kinesin.</title>
        <authorList>
            <person name="Tian J."/>
            <person name="Han L."/>
            <person name="Feng Z."/>
            <person name="Wang G."/>
            <person name="Liu W."/>
            <person name="Ma Y."/>
            <person name="Yu Y."/>
            <person name="Kong Z."/>
        </authorList>
    </citation>
    <scope>FUNCTION</scope>
    <scope>SUBCELLULAR LOCATION</scope>
    <scope>TISSUE SPECIFICITY</scope>
    <scope>DISRUPTION PHENOTYPE</scope>
    <scope>MUTAGENESIS OF THR-976</scope>
    <scope>SUBUNIT</scope>
</reference>
<reference key="24">
    <citation type="journal article" date="2015" name="J. Cell Sci.">
        <title>Arabidopsis KCBP interacts with AIR9 but stays in the cortical division zone throughout mitosis via its MyTH4-FERM domain.</title>
        <authorList>
            <person name="Buschmann H."/>
            <person name="Dols J."/>
            <person name="Kopischke S."/>
            <person name="Pena E.J."/>
            <person name="Andrade-Navarro M.A."/>
            <person name="Heinlein M."/>
            <person name="Szymanski D.B."/>
            <person name="Zachgo S."/>
            <person name="Doonan J.H."/>
            <person name="Lloyd C.W."/>
        </authorList>
    </citation>
    <scope>INTERACTION WITH AIR9</scope>
    <scope>TISSUE SPECIFICITY</scope>
    <scope>SUBCELLULAR LOCATION</scope>
</reference>
<reference key="25">
    <citation type="journal article" date="2015" name="J. Exp. Bot.">
        <title>PERK-KIPK-KCBP signalling negatively regulates root growth in Arabidopsis thaliana.</title>
        <authorList>
            <person name="Humphrey T.V."/>
            <person name="Haasen K.E."/>
            <person name="Aldea-Brydges M.G."/>
            <person name="Sun H."/>
            <person name="Zayed Y."/>
            <person name="Indriolo E."/>
            <person name="Goring D.R."/>
        </authorList>
    </citation>
    <scope>INTERACTION WITH KIPK1 AND KIPK2</scope>
    <scope>DISRUPTION PHENOTYPE</scope>
    <scope>FUNCTION</scope>
</reference>
<reference key="26">
    <citation type="journal article" date="2009" name="Proc. Natl. Acad. Sci. U.S.A.">
        <title>Structure of the complex of a mitotic kinesin with its calcium binding regulator.</title>
        <authorList>
            <person name="Vinogradova M.V."/>
            <person name="Malanina G.G."/>
            <person name="Reddy A.S."/>
            <person name="Fletterick R.J."/>
        </authorList>
    </citation>
    <scope>X-RAY CRYSTALLOGRAPHY (2.40 ANGSTROMS) OF 875-1260 IN COMPLEX WITH ADP AND KIC</scope>
    <scope>MUTAGENESIS OF CYS-1130</scope>
</reference>
<reference key="27">
    <citation type="journal article" date="2013" name="PLoS ONE">
        <title>Plant kinesin-like calmodulin binding protein employs its regulatory domain for dimerization.</title>
        <authorList>
            <person name="Vinogradova M.V."/>
            <person name="Malanina G.G."/>
            <person name="Waitzman J.S."/>
            <person name="Rice S.E."/>
            <person name="Fletterick R.J."/>
        </authorList>
    </citation>
    <scope>X-RAY CRYSTALLOGRAPHY (2.40 ANGSTROMS) OF 875-1260 IN COMPLEX WITH ADP</scope>
    <scope>SUBUNIT</scope>
    <scope>MUTAGENESIS OF CYS-1130</scope>
</reference>
<proteinExistence type="evidence at protein level"/>